<proteinExistence type="evidence at protein level"/>
<comment type="function">
    <text evidence="1">Contributes to protect fish blood from freezing at subzero sea water temperatures. Lowers the blood freezing point. Binds to nascent ice crystals and prevents further growth (By similarity).</text>
</comment>
<comment type="subcellular location">
    <subcellularLocation>
        <location evidence="3 4">Secreted</location>
    </subcellularLocation>
</comment>
<comment type="tissue specificity">
    <text evidence="3 4">Detected in blood serum (at protein level).</text>
</comment>
<comment type="similarity">
    <text evidence="5">Belongs to the type-III AFP family.</text>
</comment>
<evidence type="ECO:0000250" key="1"/>
<evidence type="ECO:0000255" key="2">
    <source>
        <dbReference type="PROSITE-ProRule" id="PRU00021"/>
    </source>
</evidence>
<evidence type="ECO:0000269" key="3">
    <source>
    </source>
</evidence>
<evidence type="ECO:0000269" key="4">
    <source>
    </source>
</evidence>
<evidence type="ECO:0000305" key="5"/>
<evidence type="ECO:0007829" key="6">
    <source>
        <dbReference type="PDB" id="1OPS"/>
    </source>
</evidence>
<organism>
    <name type="scientific">Zoarces americanus</name>
    <name type="common">Ocean pout</name>
    <name type="synonym">Macrozoarces americanus</name>
    <dbReference type="NCBI Taxonomy" id="8199"/>
    <lineage>
        <taxon>Eukaryota</taxon>
        <taxon>Metazoa</taxon>
        <taxon>Chordata</taxon>
        <taxon>Craniata</taxon>
        <taxon>Vertebrata</taxon>
        <taxon>Euteleostomi</taxon>
        <taxon>Actinopterygii</taxon>
        <taxon>Neopterygii</taxon>
        <taxon>Teleostei</taxon>
        <taxon>Neoteleostei</taxon>
        <taxon>Acanthomorphata</taxon>
        <taxon>Eupercaria</taxon>
        <taxon>Perciformes</taxon>
        <taxon>Cottioidei</taxon>
        <taxon>Zoarcales</taxon>
        <taxon>Zoarcidae</taxon>
        <taxon>Zoarcinae</taxon>
        <taxon>Zoarces</taxon>
    </lineage>
</organism>
<accession>P19608</accession>
<sequence>SQSVVATQLIPMNTALTPVMMEGKVTNPIGIPFAEMSQIVGKQVNTPVAKGQTIMPNMVKTYAA</sequence>
<dbReference type="PIR" id="D31075">
    <property type="entry name" value="D31075"/>
</dbReference>
<dbReference type="PDB" id="1OPS">
    <property type="method" value="X-ray"/>
    <property type="resolution" value="2.00 A"/>
    <property type="chains" value="A=1-64"/>
</dbReference>
<dbReference type="PDBsum" id="1OPS"/>
<dbReference type="SMR" id="P19608"/>
<dbReference type="EvolutionaryTrace" id="P19608"/>
<dbReference type="GO" id="GO:0005576">
    <property type="term" value="C:extracellular region"/>
    <property type="evidence" value="ECO:0007669"/>
    <property type="project" value="UniProtKB-SubCell"/>
</dbReference>
<dbReference type="Gene3D" id="3.90.1210.10">
    <property type="entry name" value="Antifreeze-like/N-acetylneuraminic acid synthase C-terminal domain"/>
    <property type="match status" value="1"/>
</dbReference>
<dbReference type="InterPro" id="IPR006190">
    <property type="entry name" value="AFP_Neu5c_C"/>
</dbReference>
<dbReference type="InterPro" id="IPR036732">
    <property type="entry name" value="AFP_Neu5c_C_sf"/>
</dbReference>
<dbReference type="InterPro" id="IPR006013">
    <property type="entry name" value="Antifreeze_III"/>
</dbReference>
<dbReference type="InterPro" id="IPR013974">
    <property type="entry name" value="SAF"/>
</dbReference>
<dbReference type="Pfam" id="PF08666">
    <property type="entry name" value="SAF"/>
    <property type="match status" value="1"/>
</dbReference>
<dbReference type="PRINTS" id="PR00357">
    <property type="entry name" value="ANTIFREEZIII"/>
</dbReference>
<dbReference type="SMART" id="SM00858">
    <property type="entry name" value="SAF"/>
    <property type="match status" value="1"/>
</dbReference>
<dbReference type="SUPFAM" id="SSF51269">
    <property type="entry name" value="AFP III-like domain"/>
    <property type="match status" value="1"/>
</dbReference>
<dbReference type="PROSITE" id="PS50844">
    <property type="entry name" value="AFP_LIKE"/>
    <property type="match status" value="1"/>
</dbReference>
<name>ANP1_ZOAAM</name>
<protein>
    <recommendedName>
        <fullName>Ice-structuring protein SP2(HPLC 1)</fullName>
        <shortName>ISP SP2(HPLC 1)</shortName>
    </recommendedName>
    <alternativeName>
        <fullName>Antifreeze protein SP2(HPLC 1)</fullName>
    </alternativeName>
</protein>
<reference key="1">
    <citation type="journal article" date="1988" name="J. Biol. Chem.">
        <title>Multiple genes provide the basis for antifreeze protein diversity and dosage in the ocean pout, Macrozoarces americanus.</title>
        <authorList>
            <person name="Hew C.-L."/>
            <person name="Wang N.-C."/>
            <person name="Joshi S."/>
            <person name="Fletcher G.L."/>
            <person name="Scott G.K."/>
            <person name="Hayes P.H."/>
            <person name="Buettner B."/>
            <person name="Davies P.L."/>
        </authorList>
    </citation>
    <scope>PROTEIN SEQUENCE</scope>
    <scope>SUBCELLULAR LOCATION</scope>
    <scope>TISSUE SPECIFICITY</scope>
</reference>
<reference key="2">
    <citation type="journal article" date="1998" name="Biophys. J.">
        <title>Identification of the ice-binding surface on a type III antifreeze protein with a 'flatness function' algorithm.</title>
        <authorList>
            <person name="Yang D.S."/>
            <person name="Hon W.C."/>
            <person name="Bubanko S."/>
            <person name="Xue Y."/>
            <person name="Seetharaman J."/>
            <person name="Hew C.L."/>
            <person name="Sicheri F."/>
        </authorList>
    </citation>
    <scope>X-RAY CRYSTALLOGRAPHY (2.00 ANGSTROMS)</scope>
    <scope>SUBCELLULAR LOCATION</scope>
    <scope>TISSUE SPECIFICITY</scope>
</reference>
<keyword id="KW-0002">3D-structure</keyword>
<keyword id="KW-0047">Antifreeze protein</keyword>
<keyword id="KW-0903">Direct protein sequencing</keyword>
<keyword id="KW-0964">Secreted</keyword>
<feature type="chain" id="PRO_0000155155" description="Ice-structuring protein SP2(HPLC 1)">
    <location>
        <begin position="1"/>
        <end position="64"/>
    </location>
</feature>
<feature type="domain" description="AFP-like" evidence="2">
    <location>
        <begin position="3"/>
        <end position="62"/>
    </location>
</feature>
<feature type="site" description="Important for ice-binding" evidence="1">
    <location>
        <position position="8"/>
    </location>
</feature>
<feature type="site" description="Important for ice-binding" evidence="1">
    <location>
        <position position="13"/>
    </location>
</feature>
<feature type="site" description="Important for ice-binding" evidence="1">
    <location>
        <position position="17"/>
    </location>
</feature>
<feature type="site" description="Important for ice-binding" evidence="1">
    <location>
        <position position="43"/>
    </location>
</feature>
<feature type="strand" evidence="6">
    <location>
        <begin position="3"/>
        <end position="8"/>
    </location>
</feature>
<feature type="helix" evidence="6">
    <location>
        <begin position="18"/>
        <end position="20"/>
    </location>
</feature>
<feature type="strand" evidence="6">
    <location>
        <begin position="21"/>
        <end position="24"/>
    </location>
</feature>
<feature type="helix" evidence="6">
    <location>
        <begin position="33"/>
        <end position="38"/>
    </location>
</feature>
<feature type="turn" evidence="6">
    <location>
        <begin position="39"/>
        <end position="41"/>
    </location>
</feature>
<feature type="strand" evidence="6">
    <location>
        <begin position="43"/>
        <end position="46"/>
    </location>
</feature>
<feature type="helix" evidence="6">
    <location>
        <begin position="56"/>
        <end position="58"/>
    </location>
</feature>
<feature type="turn" evidence="6">
    <location>
        <begin position="60"/>
        <end position="63"/>
    </location>
</feature>